<comment type="function">
    <text evidence="1">Located at the top of the head of the 30S subunit, it contacts several helices of the 16S rRNA. In the 70S ribosome it contacts the 23S rRNA (bridge B1a) and protein L5 of the 50S subunit (bridge B1b), connecting the 2 subunits; these bridges are implicated in subunit movement. Contacts the tRNAs in the A and P-sites.</text>
</comment>
<comment type="subunit">
    <text evidence="1">Part of the 30S ribosomal subunit. Forms a loose heterodimer with protein S19. Forms two bridges to the 50S subunit in the 70S ribosome.</text>
</comment>
<comment type="similarity">
    <text evidence="1">Belongs to the universal ribosomal protein uS13 family.</text>
</comment>
<reference key="1">
    <citation type="submission" date="2007-10" db="EMBL/GenBank/DDBJ databases">
        <title>Complete genome of Alkaliphilus oremlandii OhILAs.</title>
        <authorList>
            <person name="Copeland A."/>
            <person name="Lucas S."/>
            <person name="Lapidus A."/>
            <person name="Barry K."/>
            <person name="Detter J.C."/>
            <person name="Glavina del Rio T."/>
            <person name="Hammon N."/>
            <person name="Israni S."/>
            <person name="Dalin E."/>
            <person name="Tice H."/>
            <person name="Pitluck S."/>
            <person name="Chain P."/>
            <person name="Malfatti S."/>
            <person name="Shin M."/>
            <person name="Vergez L."/>
            <person name="Schmutz J."/>
            <person name="Larimer F."/>
            <person name="Land M."/>
            <person name="Hauser L."/>
            <person name="Kyrpides N."/>
            <person name="Mikhailova N."/>
            <person name="Stolz J.F."/>
            <person name="Dawson A."/>
            <person name="Fisher E."/>
            <person name="Crable B."/>
            <person name="Perera E."/>
            <person name="Lisak J."/>
            <person name="Ranganathan M."/>
            <person name="Basu P."/>
            <person name="Richardson P."/>
        </authorList>
    </citation>
    <scope>NUCLEOTIDE SEQUENCE [LARGE SCALE GENOMIC DNA]</scope>
    <source>
        <strain>OhILAs</strain>
    </source>
</reference>
<dbReference type="EMBL" id="CP000853">
    <property type="protein sequence ID" value="ABW18080.1"/>
    <property type="molecule type" value="Genomic_DNA"/>
</dbReference>
<dbReference type="RefSeq" id="WP_012158394.1">
    <property type="nucleotide sequence ID" value="NC_009922.1"/>
</dbReference>
<dbReference type="SMR" id="A8MLG6"/>
<dbReference type="STRING" id="350688.Clos_0518"/>
<dbReference type="KEGG" id="aoe:Clos_0518"/>
<dbReference type="eggNOG" id="COG0099">
    <property type="taxonomic scope" value="Bacteria"/>
</dbReference>
<dbReference type="HOGENOM" id="CLU_103849_1_2_9"/>
<dbReference type="OrthoDB" id="9803610at2"/>
<dbReference type="Proteomes" id="UP000000269">
    <property type="component" value="Chromosome"/>
</dbReference>
<dbReference type="GO" id="GO:0005829">
    <property type="term" value="C:cytosol"/>
    <property type="evidence" value="ECO:0007669"/>
    <property type="project" value="TreeGrafter"/>
</dbReference>
<dbReference type="GO" id="GO:0015935">
    <property type="term" value="C:small ribosomal subunit"/>
    <property type="evidence" value="ECO:0007669"/>
    <property type="project" value="TreeGrafter"/>
</dbReference>
<dbReference type="GO" id="GO:0019843">
    <property type="term" value="F:rRNA binding"/>
    <property type="evidence" value="ECO:0007669"/>
    <property type="project" value="UniProtKB-UniRule"/>
</dbReference>
<dbReference type="GO" id="GO:0003735">
    <property type="term" value="F:structural constituent of ribosome"/>
    <property type="evidence" value="ECO:0007669"/>
    <property type="project" value="InterPro"/>
</dbReference>
<dbReference type="GO" id="GO:0000049">
    <property type="term" value="F:tRNA binding"/>
    <property type="evidence" value="ECO:0007669"/>
    <property type="project" value="UniProtKB-UniRule"/>
</dbReference>
<dbReference type="GO" id="GO:0006412">
    <property type="term" value="P:translation"/>
    <property type="evidence" value="ECO:0007669"/>
    <property type="project" value="UniProtKB-UniRule"/>
</dbReference>
<dbReference type="FunFam" id="1.10.8.50:FF:000001">
    <property type="entry name" value="30S ribosomal protein S13"/>
    <property type="match status" value="1"/>
</dbReference>
<dbReference type="FunFam" id="4.10.910.10:FF:000001">
    <property type="entry name" value="30S ribosomal protein S13"/>
    <property type="match status" value="1"/>
</dbReference>
<dbReference type="Gene3D" id="1.10.8.50">
    <property type="match status" value="1"/>
</dbReference>
<dbReference type="Gene3D" id="4.10.910.10">
    <property type="entry name" value="30s ribosomal protein s13, domain 2"/>
    <property type="match status" value="1"/>
</dbReference>
<dbReference type="HAMAP" id="MF_01315">
    <property type="entry name" value="Ribosomal_uS13"/>
    <property type="match status" value="1"/>
</dbReference>
<dbReference type="InterPro" id="IPR027437">
    <property type="entry name" value="Rbsml_uS13_C"/>
</dbReference>
<dbReference type="InterPro" id="IPR001892">
    <property type="entry name" value="Ribosomal_uS13"/>
</dbReference>
<dbReference type="InterPro" id="IPR010979">
    <property type="entry name" value="Ribosomal_uS13-like_H2TH"/>
</dbReference>
<dbReference type="InterPro" id="IPR019980">
    <property type="entry name" value="Ribosomal_uS13_bac-type"/>
</dbReference>
<dbReference type="InterPro" id="IPR018269">
    <property type="entry name" value="Ribosomal_uS13_CS"/>
</dbReference>
<dbReference type="NCBIfam" id="TIGR03631">
    <property type="entry name" value="uS13_bact"/>
    <property type="match status" value="1"/>
</dbReference>
<dbReference type="PANTHER" id="PTHR10871">
    <property type="entry name" value="30S RIBOSOMAL PROTEIN S13/40S RIBOSOMAL PROTEIN S18"/>
    <property type="match status" value="1"/>
</dbReference>
<dbReference type="PANTHER" id="PTHR10871:SF1">
    <property type="entry name" value="SMALL RIBOSOMAL SUBUNIT PROTEIN US13M"/>
    <property type="match status" value="1"/>
</dbReference>
<dbReference type="Pfam" id="PF00416">
    <property type="entry name" value="Ribosomal_S13"/>
    <property type="match status" value="1"/>
</dbReference>
<dbReference type="PIRSF" id="PIRSF002134">
    <property type="entry name" value="Ribosomal_S13"/>
    <property type="match status" value="1"/>
</dbReference>
<dbReference type="SUPFAM" id="SSF46946">
    <property type="entry name" value="S13-like H2TH domain"/>
    <property type="match status" value="1"/>
</dbReference>
<dbReference type="PROSITE" id="PS00646">
    <property type="entry name" value="RIBOSOMAL_S13_1"/>
    <property type="match status" value="1"/>
</dbReference>
<dbReference type="PROSITE" id="PS50159">
    <property type="entry name" value="RIBOSOMAL_S13_2"/>
    <property type="match status" value="1"/>
</dbReference>
<gene>
    <name evidence="1" type="primary">rpsM</name>
    <name type="ordered locus">Clos_0518</name>
</gene>
<sequence>MARIAGVDLPRDKRVEVGLTYIFGIGRKTSNNILAAAGINPDTRIKDLTEEEVNNLRRIIDADHHVEGDLRREIALNIKRLKEIRCYRGIRHIKGLPVRGQKTKTNARTRKGPKKTVGRKKKK</sequence>
<keyword id="KW-1185">Reference proteome</keyword>
<keyword id="KW-0687">Ribonucleoprotein</keyword>
<keyword id="KW-0689">Ribosomal protein</keyword>
<keyword id="KW-0694">RNA-binding</keyword>
<keyword id="KW-0699">rRNA-binding</keyword>
<keyword id="KW-0820">tRNA-binding</keyword>
<name>RS13_ALKOO</name>
<accession>A8MLG6</accession>
<protein>
    <recommendedName>
        <fullName evidence="1">Small ribosomal subunit protein uS13</fullName>
    </recommendedName>
    <alternativeName>
        <fullName evidence="3">30S ribosomal protein S13</fullName>
    </alternativeName>
</protein>
<proteinExistence type="inferred from homology"/>
<organism>
    <name type="scientific">Alkaliphilus oremlandii (strain OhILAs)</name>
    <name type="common">Clostridium oremlandii (strain OhILAs)</name>
    <dbReference type="NCBI Taxonomy" id="350688"/>
    <lineage>
        <taxon>Bacteria</taxon>
        <taxon>Bacillati</taxon>
        <taxon>Bacillota</taxon>
        <taxon>Clostridia</taxon>
        <taxon>Peptostreptococcales</taxon>
        <taxon>Natronincolaceae</taxon>
        <taxon>Alkaliphilus</taxon>
    </lineage>
</organism>
<evidence type="ECO:0000255" key="1">
    <source>
        <dbReference type="HAMAP-Rule" id="MF_01315"/>
    </source>
</evidence>
<evidence type="ECO:0000256" key="2">
    <source>
        <dbReference type="SAM" id="MobiDB-lite"/>
    </source>
</evidence>
<evidence type="ECO:0000305" key="3"/>
<feature type="chain" id="PRO_1000067514" description="Small ribosomal subunit protein uS13">
    <location>
        <begin position="1"/>
        <end position="123"/>
    </location>
</feature>
<feature type="region of interest" description="Disordered" evidence="2">
    <location>
        <begin position="97"/>
        <end position="123"/>
    </location>
</feature>
<feature type="compositionally biased region" description="Basic residues" evidence="2">
    <location>
        <begin position="101"/>
        <end position="123"/>
    </location>
</feature>